<gene>
    <name evidence="1" type="primary">rpsP</name>
    <name type="ordered locus">BAB1_1832</name>
</gene>
<name>RS16_BRUA2</name>
<organism>
    <name type="scientific">Brucella abortus (strain 2308)</name>
    <dbReference type="NCBI Taxonomy" id="359391"/>
    <lineage>
        <taxon>Bacteria</taxon>
        <taxon>Pseudomonadati</taxon>
        <taxon>Pseudomonadota</taxon>
        <taxon>Alphaproteobacteria</taxon>
        <taxon>Hyphomicrobiales</taxon>
        <taxon>Brucellaceae</taxon>
        <taxon>Brucella/Ochrobactrum group</taxon>
        <taxon>Brucella</taxon>
    </lineage>
</organism>
<dbReference type="EMBL" id="AM040264">
    <property type="protein sequence ID" value="CAJ11788.1"/>
    <property type="molecule type" value="Genomic_DNA"/>
</dbReference>
<dbReference type="RefSeq" id="WP_002964901.1">
    <property type="nucleotide sequence ID" value="NZ_KN046823.1"/>
</dbReference>
<dbReference type="SMR" id="Q2YLK6"/>
<dbReference type="STRING" id="359391.BAB1_1832"/>
<dbReference type="GeneID" id="93017838"/>
<dbReference type="KEGG" id="bmf:BAB1_1832"/>
<dbReference type="PATRIC" id="fig|359391.11.peg.345"/>
<dbReference type="HOGENOM" id="CLU_100590_3_1_5"/>
<dbReference type="PhylomeDB" id="Q2YLK6"/>
<dbReference type="Proteomes" id="UP000002719">
    <property type="component" value="Chromosome I"/>
</dbReference>
<dbReference type="GO" id="GO:0005737">
    <property type="term" value="C:cytoplasm"/>
    <property type="evidence" value="ECO:0007669"/>
    <property type="project" value="UniProtKB-ARBA"/>
</dbReference>
<dbReference type="GO" id="GO:0015935">
    <property type="term" value="C:small ribosomal subunit"/>
    <property type="evidence" value="ECO:0007669"/>
    <property type="project" value="TreeGrafter"/>
</dbReference>
<dbReference type="GO" id="GO:0003735">
    <property type="term" value="F:structural constituent of ribosome"/>
    <property type="evidence" value="ECO:0007669"/>
    <property type="project" value="InterPro"/>
</dbReference>
<dbReference type="GO" id="GO:0006412">
    <property type="term" value="P:translation"/>
    <property type="evidence" value="ECO:0007669"/>
    <property type="project" value="UniProtKB-UniRule"/>
</dbReference>
<dbReference type="Gene3D" id="3.30.1320.10">
    <property type="match status" value="1"/>
</dbReference>
<dbReference type="HAMAP" id="MF_00385">
    <property type="entry name" value="Ribosomal_bS16"/>
    <property type="match status" value="1"/>
</dbReference>
<dbReference type="InterPro" id="IPR000307">
    <property type="entry name" value="Ribosomal_bS16"/>
</dbReference>
<dbReference type="InterPro" id="IPR023803">
    <property type="entry name" value="Ribosomal_bS16_dom_sf"/>
</dbReference>
<dbReference type="NCBIfam" id="TIGR00002">
    <property type="entry name" value="S16"/>
    <property type="match status" value="1"/>
</dbReference>
<dbReference type="PANTHER" id="PTHR12919">
    <property type="entry name" value="30S RIBOSOMAL PROTEIN S16"/>
    <property type="match status" value="1"/>
</dbReference>
<dbReference type="PANTHER" id="PTHR12919:SF20">
    <property type="entry name" value="SMALL RIBOSOMAL SUBUNIT PROTEIN BS16M"/>
    <property type="match status" value="1"/>
</dbReference>
<dbReference type="Pfam" id="PF00886">
    <property type="entry name" value="Ribosomal_S16"/>
    <property type="match status" value="1"/>
</dbReference>
<dbReference type="SUPFAM" id="SSF54565">
    <property type="entry name" value="Ribosomal protein S16"/>
    <property type="match status" value="1"/>
</dbReference>
<comment type="similarity">
    <text evidence="1">Belongs to the bacterial ribosomal protein bS16 family.</text>
</comment>
<feature type="chain" id="PRO_0000243784" description="Small ribosomal subunit protein bS16">
    <location>
        <begin position="1"/>
        <end position="134"/>
    </location>
</feature>
<feature type="region of interest" description="Disordered" evidence="2">
    <location>
        <begin position="79"/>
        <end position="134"/>
    </location>
</feature>
<feature type="compositionally biased region" description="Low complexity" evidence="2">
    <location>
        <begin position="115"/>
        <end position="134"/>
    </location>
</feature>
<protein>
    <recommendedName>
        <fullName evidence="1">Small ribosomal subunit protein bS16</fullName>
    </recommendedName>
    <alternativeName>
        <fullName evidence="3">30S ribosomal protein S16</fullName>
    </alternativeName>
</protein>
<evidence type="ECO:0000255" key="1">
    <source>
        <dbReference type="HAMAP-Rule" id="MF_00385"/>
    </source>
</evidence>
<evidence type="ECO:0000256" key="2">
    <source>
        <dbReference type="SAM" id="MobiDB-lite"/>
    </source>
</evidence>
<evidence type="ECO:0000305" key="3"/>
<keyword id="KW-1185">Reference proteome</keyword>
<keyword id="KW-0687">Ribonucleoprotein</keyword>
<keyword id="KW-0689">Ribosomal protein</keyword>
<accession>Q2YLK6</accession>
<sequence>MALKIRLARAGSKKRPYYHVVVADVRAPRDGRFIETVGSWNPVLPKDAERVKLDAERIQHWIAQGAQPTDRVLRFLDQAGIAKRPSRNNPTKGEPGKKAQERLALAKQAEEEASAKAAEAAAAAAAPAEEAASE</sequence>
<reference key="1">
    <citation type="journal article" date="2005" name="Infect. Immun.">
        <title>Whole-genome analyses of speciation events in pathogenic Brucellae.</title>
        <authorList>
            <person name="Chain P.S."/>
            <person name="Comerci D.J."/>
            <person name="Tolmasky M.E."/>
            <person name="Larimer F.W."/>
            <person name="Malfatti S.A."/>
            <person name="Vergez L.M."/>
            <person name="Aguero F."/>
            <person name="Land M.L."/>
            <person name="Ugalde R.A."/>
            <person name="Garcia E."/>
        </authorList>
    </citation>
    <scope>NUCLEOTIDE SEQUENCE [LARGE SCALE GENOMIC DNA]</scope>
    <source>
        <strain>2308</strain>
    </source>
</reference>
<proteinExistence type="inferred from homology"/>